<feature type="chain" id="PRO_1000052675" description="Large ribosomal subunit protein uL22">
    <location>
        <begin position="1"/>
        <end position="110"/>
    </location>
</feature>
<sequence length="110" mass="12186">METIAKHRHARSSAQKVRLVADLIRGKKVSQALETLTYTNKKAAGLVKKVLESAIANAEHNDGADIDDLKVTKIFVDEGPSMKRIMPRAKGRADRILKRTSHITVVVSDR</sequence>
<evidence type="ECO:0000255" key="1">
    <source>
        <dbReference type="HAMAP-Rule" id="MF_01331"/>
    </source>
</evidence>
<evidence type="ECO:0000305" key="2"/>
<organism>
    <name type="scientific">Yersinia pestis bv. Antiqua (strain Antiqua)</name>
    <dbReference type="NCBI Taxonomy" id="360102"/>
    <lineage>
        <taxon>Bacteria</taxon>
        <taxon>Pseudomonadati</taxon>
        <taxon>Pseudomonadota</taxon>
        <taxon>Gammaproteobacteria</taxon>
        <taxon>Enterobacterales</taxon>
        <taxon>Yersiniaceae</taxon>
        <taxon>Yersinia</taxon>
    </lineage>
</organism>
<name>RL22_YERPA</name>
<comment type="function">
    <text evidence="1">This protein binds specifically to 23S rRNA; its binding is stimulated by other ribosomal proteins, e.g. L4, L17, and L20. It is important during the early stages of 50S assembly. It makes multiple contacts with different domains of the 23S rRNA in the assembled 50S subunit and ribosome (By similarity).</text>
</comment>
<comment type="function">
    <text evidence="1">The globular domain of the protein is located near the polypeptide exit tunnel on the outside of the subunit, while an extended beta-hairpin is found that lines the wall of the exit tunnel in the center of the 70S ribosome.</text>
</comment>
<comment type="subunit">
    <text evidence="1">Part of the 50S ribosomal subunit.</text>
</comment>
<comment type="similarity">
    <text evidence="1">Belongs to the universal ribosomal protein uL22 family.</text>
</comment>
<reference key="1">
    <citation type="journal article" date="2006" name="J. Bacteriol.">
        <title>Complete genome sequence of Yersinia pestis strains Antiqua and Nepal516: evidence of gene reduction in an emerging pathogen.</title>
        <authorList>
            <person name="Chain P.S.G."/>
            <person name="Hu P."/>
            <person name="Malfatti S.A."/>
            <person name="Radnedge L."/>
            <person name="Larimer F."/>
            <person name="Vergez L.M."/>
            <person name="Worsham P."/>
            <person name="Chu M.C."/>
            <person name="Andersen G.L."/>
        </authorList>
    </citation>
    <scope>NUCLEOTIDE SEQUENCE [LARGE SCALE GENOMIC DNA]</scope>
    <source>
        <strain>Antiqua</strain>
    </source>
</reference>
<keyword id="KW-0687">Ribonucleoprotein</keyword>
<keyword id="KW-0689">Ribosomal protein</keyword>
<keyword id="KW-0694">RNA-binding</keyword>
<keyword id="KW-0699">rRNA-binding</keyword>
<protein>
    <recommendedName>
        <fullName evidence="1">Large ribosomal subunit protein uL22</fullName>
    </recommendedName>
    <alternativeName>
        <fullName evidence="2">50S ribosomal protein L22</fullName>
    </alternativeName>
</protein>
<dbReference type="EMBL" id="CP000308">
    <property type="protein sequence ID" value="ABG15220.1"/>
    <property type="molecule type" value="Genomic_DNA"/>
</dbReference>
<dbReference type="RefSeq" id="WP_002223844.1">
    <property type="nucleotide sequence ID" value="NZ_CP009906.1"/>
</dbReference>
<dbReference type="SMR" id="Q1C2V2"/>
<dbReference type="GeneID" id="98190601"/>
<dbReference type="KEGG" id="ypa:YPA_3258"/>
<dbReference type="Proteomes" id="UP000001971">
    <property type="component" value="Chromosome"/>
</dbReference>
<dbReference type="GO" id="GO:0022625">
    <property type="term" value="C:cytosolic large ribosomal subunit"/>
    <property type="evidence" value="ECO:0007669"/>
    <property type="project" value="TreeGrafter"/>
</dbReference>
<dbReference type="GO" id="GO:0019843">
    <property type="term" value="F:rRNA binding"/>
    <property type="evidence" value="ECO:0007669"/>
    <property type="project" value="UniProtKB-UniRule"/>
</dbReference>
<dbReference type="GO" id="GO:0003735">
    <property type="term" value="F:structural constituent of ribosome"/>
    <property type="evidence" value="ECO:0007669"/>
    <property type="project" value="InterPro"/>
</dbReference>
<dbReference type="GO" id="GO:0006412">
    <property type="term" value="P:translation"/>
    <property type="evidence" value="ECO:0007669"/>
    <property type="project" value="UniProtKB-UniRule"/>
</dbReference>
<dbReference type="CDD" id="cd00336">
    <property type="entry name" value="Ribosomal_L22"/>
    <property type="match status" value="1"/>
</dbReference>
<dbReference type="FunFam" id="3.90.470.10:FF:000001">
    <property type="entry name" value="50S ribosomal protein L22"/>
    <property type="match status" value="1"/>
</dbReference>
<dbReference type="Gene3D" id="3.90.470.10">
    <property type="entry name" value="Ribosomal protein L22/L17"/>
    <property type="match status" value="1"/>
</dbReference>
<dbReference type="HAMAP" id="MF_01331_B">
    <property type="entry name" value="Ribosomal_uL22_B"/>
    <property type="match status" value="1"/>
</dbReference>
<dbReference type="InterPro" id="IPR001063">
    <property type="entry name" value="Ribosomal_uL22"/>
</dbReference>
<dbReference type="InterPro" id="IPR005727">
    <property type="entry name" value="Ribosomal_uL22_bac/chlpt-type"/>
</dbReference>
<dbReference type="InterPro" id="IPR047867">
    <property type="entry name" value="Ribosomal_uL22_bac/org-type"/>
</dbReference>
<dbReference type="InterPro" id="IPR018260">
    <property type="entry name" value="Ribosomal_uL22_CS"/>
</dbReference>
<dbReference type="InterPro" id="IPR036394">
    <property type="entry name" value="Ribosomal_uL22_sf"/>
</dbReference>
<dbReference type="NCBIfam" id="TIGR01044">
    <property type="entry name" value="rplV_bact"/>
    <property type="match status" value="1"/>
</dbReference>
<dbReference type="PANTHER" id="PTHR13501">
    <property type="entry name" value="CHLOROPLAST 50S RIBOSOMAL PROTEIN L22-RELATED"/>
    <property type="match status" value="1"/>
</dbReference>
<dbReference type="PANTHER" id="PTHR13501:SF8">
    <property type="entry name" value="LARGE RIBOSOMAL SUBUNIT PROTEIN UL22M"/>
    <property type="match status" value="1"/>
</dbReference>
<dbReference type="Pfam" id="PF00237">
    <property type="entry name" value="Ribosomal_L22"/>
    <property type="match status" value="1"/>
</dbReference>
<dbReference type="SUPFAM" id="SSF54843">
    <property type="entry name" value="Ribosomal protein L22"/>
    <property type="match status" value="1"/>
</dbReference>
<dbReference type="PROSITE" id="PS00464">
    <property type="entry name" value="RIBOSOMAL_L22"/>
    <property type="match status" value="1"/>
</dbReference>
<accession>Q1C2V2</accession>
<proteinExistence type="inferred from homology"/>
<gene>
    <name evidence="1" type="primary">rplV</name>
    <name type="ordered locus">YPA_3258</name>
</gene>